<accession>P45252</accession>
<evidence type="ECO:0000305" key="1"/>
<dbReference type="EMBL" id="L42023">
    <property type="protein sequence ID" value="AAC23207.1"/>
    <property type="molecule type" value="Genomic_DNA"/>
</dbReference>
<dbReference type="PIR" id="E64172">
    <property type="entry name" value="E64172"/>
</dbReference>
<dbReference type="RefSeq" id="NP_439707.1">
    <property type="nucleotide sequence ID" value="NC_000907.1"/>
</dbReference>
<dbReference type="SMR" id="P45252"/>
<dbReference type="STRING" id="71421.HI_1558"/>
<dbReference type="EnsemblBacteria" id="AAC23207">
    <property type="protein sequence ID" value="AAC23207"/>
    <property type="gene ID" value="HI_1558"/>
</dbReference>
<dbReference type="KEGG" id="hin:HI_1558"/>
<dbReference type="PATRIC" id="fig|71421.8.peg.1629"/>
<dbReference type="eggNOG" id="COG2912">
    <property type="taxonomic scope" value="Bacteria"/>
</dbReference>
<dbReference type="HOGENOM" id="CLU_063810_0_1_6"/>
<dbReference type="OrthoDB" id="232498at2"/>
<dbReference type="PhylomeDB" id="P45252"/>
<dbReference type="BioCyc" id="HINF71421:G1GJ1-1578-MONOMER"/>
<dbReference type="Proteomes" id="UP000000579">
    <property type="component" value="Chromosome"/>
</dbReference>
<dbReference type="InterPro" id="IPR032698">
    <property type="entry name" value="SirB1_N"/>
</dbReference>
<dbReference type="InterPro" id="IPR011990">
    <property type="entry name" value="TPR-like_helical_dom_sf"/>
</dbReference>
<dbReference type="PANTHER" id="PTHR31350:SF21">
    <property type="entry name" value="F-BOX ONLY PROTEIN 21"/>
    <property type="match status" value="1"/>
</dbReference>
<dbReference type="PANTHER" id="PTHR31350">
    <property type="entry name" value="SI:DKEY-261L7.2"/>
    <property type="match status" value="1"/>
</dbReference>
<dbReference type="Pfam" id="PF13371">
    <property type="entry name" value="TPR_9"/>
    <property type="match status" value="1"/>
</dbReference>
<dbReference type="Pfam" id="PF13369">
    <property type="entry name" value="Transglut_core2"/>
    <property type="match status" value="1"/>
</dbReference>
<dbReference type="SUPFAM" id="SSF48452">
    <property type="entry name" value="TPR-like"/>
    <property type="match status" value="1"/>
</dbReference>
<proteinExistence type="inferred from homology"/>
<sequence>MKYYRRALYDKFVHFYLVISDDGSSEAQLRGKMGGLVRKARKKISPDWPKEEQIHQLLQLFYGDWGFHCDPEDYFYARNLYLPYVFEHRQGMPVTLGAMVFYLAEALDLPIYPVNFPTQLILRAEVRDEVAFIDPWDGTYISQEKLQQLYEGAFGFGAKIQPEELDRADLSLLYSRFEQLAKNALIREEHNDMAYHYIKNLMITDAENPYHIRDRGLVLAQMGAYPSALKDLEFFVEHCPKDPTAAFIRTQLLELKGEINKDTFPLH</sequence>
<gene>
    <name type="ordered locus">HI_1558</name>
</gene>
<protein>
    <recommendedName>
        <fullName>UPF0162 protein HI_1558</fullName>
    </recommendedName>
</protein>
<comment type="similarity">
    <text evidence="1">Belongs to the UPF0162 family.</text>
</comment>
<keyword id="KW-1185">Reference proteome</keyword>
<reference key="1">
    <citation type="journal article" date="1995" name="Science">
        <title>Whole-genome random sequencing and assembly of Haemophilus influenzae Rd.</title>
        <authorList>
            <person name="Fleischmann R.D."/>
            <person name="Adams M.D."/>
            <person name="White O."/>
            <person name="Clayton R.A."/>
            <person name="Kirkness E.F."/>
            <person name="Kerlavage A.R."/>
            <person name="Bult C.J."/>
            <person name="Tomb J.-F."/>
            <person name="Dougherty B.A."/>
            <person name="Merrick J.M."/>
            <person name="McKenney K."/>
            <person name="Sutton G.G."/>
            <person name="FitzHugh W."/>
            <person name="Fields C.A."/>
            <person name="Gocayne J.D."/>
            <person name="Scott J.D."/>
            <person name="Shirley R."/>
            <person name="Liu L.-I."/>
            <person name="Glodek A."/>
            <person name="Kelley J.M."/>
            <person name="Weidman J.F."/>
            <person name="Phillips C.A."/>
            <person name="Spriggs T."/>
            <person name="Hedblom E."/>
            <person name="Cotton M.D."/>
            <person name="Utterback T.R."/>
            <person name="Hanna M.C."/>
            <person name="Nguyen D.T."/>
            <person name="Saudek D.M."/>
            <person name="Brandon R.C."/>
            <person name="Fine L.D."/>
            <person name="Fritchman J.L."/>
            <person name="Fuhrmann J.L."/>
            <person name="Geoghagen N.S.M."/>
            <person name="Gnehm C.L."/>
            <person name="McDonald L.A."/>
            <person name="Small K.V."/>
            <person name="Fraser C.M."/>
            <person name="Smith H.O."/>
            <person name="Venter J.C."/>
        </authorList>
    </citation>
    <scope>NUCLEOTIDE SEQUENCE [LARGE SCALE GENOMIC DNA]</scope>
    <source>
        <strain>ATCC 51907 / DSM 11121 / KW20 / Rd</strain>
    </source>
</reference>
<name>Y1558_HAEIN</name>
<organism>
    <name type="scientific">Haemophilus influenzae (strain ATCC 51907 / DSM 11121 / KW20 / Rd)</name>
    <dbReference type="NCBI Taxonomy" id="71421"/>
    <lineage>
        <taxon>Bacteria</taxon>
        <taxon>Pseudomonadati</taxon>
        <taxon>Pseudomonadota</taxon>
        <taxon>Gammaproteobacteria</taxon>
        <taxon>Pasteurellales</taxon>
        <taxon>Pasteurellaceae</taxon>
        <taxon>Haemophilus</taxon>
    </lineage>
</organism>
<feature type="chain" id="PRO_0000202384" description="UPF0162 protein HI_1558">
    <location>
        <begin position="1"/>
        <end position="267"/>
    </location>
</feature>